<sequence length="227" mass="25473">MNSIEFPLLNQTTQNSVISTTSNDLSNWSRLSSLWPLLYGTSCCFIEFASLIGSRFDFDRYGLVPRSSPRQADLILTAGTVTMKMAPSLVRLYEQMPEPKYVIAMGACTITGGMFSTDSYSTVRGVDKLIPVDVYLPGCPPKPEAVIDAITKLRKKVSREIYEDRVGSQQETRCFTINHKFRVGRSTHTGNYDQGLLYQSPSISEIPYENETFLKYKIAVSSHKLVN</sequence>
<evidence type="ECO:0000255" key="1">
    <source>
        <dbReference type="HAMAP-Rule" id="MF_01356"/>
    </source>
</evidence>
<accession>A1XGP2</accession>
<comment type="function">
    <text evidence="1">NDH shuttles electrons from NAD(P)H:plastoquinone, via FMN and iron-sulfur (Fe-S) centers, to quinones in the photosynthetic chain and possibly in a chloroplast respiratory chain. The immediate electron acceptor for the enzyme in this species is believed to be plastoquinone. Couples the redox reaction to proton translocation, and thus conserves the redox energy in a proton gradient.</text>
</comment>
<comment type="catalytic activity">
    <reaction evidence="1">
        <text>a plastoquinone + NADH + (n+1) H(+)(in) = a plastoquinol + NAD(+) + n H(+)(out)</text>
        <dbReference type="Rhea" id="RHEA:42608"/>
        <dbReference type="Rhea" id="RHEA-COMP:9561"/>
        <dbReference type="Rhea" id="RHEA-COMP:9562"/>
        <dbReference type="ChEBI" id="CHEBI:15378"/>
        <dbReference type="ChEBI" id="CHEBI:17757"/>
        <dbReference type="ChEBI" id="CHEBI:57540"/>
        <dbReference type="ChEBI" id="CHEBI:57945"/>
        <dbReference type="ChEBI" id="CHEBI:62192"/>
    </reaction>
</comment>
<comment type="catalytic activity">
    <reaction evidence="1">
        <text>a plastoquinone + NADPH + (n+1) H(+)(in) = a plastoquinol + NADP(+) + n H(+)(out)</text>
        <dbReference type="Rhea" id="RHEA:42612"/>
        <dbReference type="Rhea" id="RHEA-COMP:9561"/>
        <dbReference type="Rhea" id="RHEA-COMP:9562"/>
        <dbReference type="ChEBI" id="CHEBI:15378"/>
        <dbReference type="ChEBI" id="CHEBI:17757"/>
        <dbReference type="ChEBI" id="CHEBI:57783"/>
        <dbReference type="ChEBI" id="CHEBI:58349"/>
        <dbReference type="ChEBI" id="CHEBI:62192"/>
    </reaction>
</comment>
<comment type="cofactor">
    <cofactor evidence="1">
        <name>[4Fe-4S] cluster</name>
        <dbReference type="ChEBI" id="CHEBI:49883"/>
    </cofactor>
    <text evidence="1">Binds 1 [4Fe-4S] cluster.</text>
</comment>
<comment type="subunit">
    <text evidence="1">NDH is composed of at least 16 different subunits, 5 of which are encoded in the nucleus.</text>
</comment>
<comment type="subcellular location">
    <subcellularLocation>
        <location evidence="1">Plastid</location>
        <location evidence="1">Chloroplast thylakoid membrane</location>
        <topology evidence="1">Peripheral membrane protein</topology>
        <orientation evidence="1">Stromal side</orientation>
    </subcellularLocation>
</comment>
<comment type="similarity">
    <text evidence="1">Belongs to the complex I 20 kDa subunit family.</text>
</comment>
<protein>
    <recommendedName>
        <fullName evidence="1">NAD(P)H-quinone oxidoreductase subunit K, chloroplastic</fullName>
        <ecNumber evidence="1">7.1.1.-</ecNumber>
    </recommendedName>
    <alternativeName>
        <fullName evidence="1">NAD(P)H dehydrogenase subunit K</fullName>
    </alternativeName>
    <alternativeName>
        <fullName evidence="1">NADH-plastoquinone oxidoreductase subunit K</fullName>
    </alternativeName>
</protein>
<feature type="chain" id="PRO_0000358581" description="NAD(P)H-quinone oxidoreductase subunit K, chloroplastic">
    <location>
        <begin position="1"/>
        <end position="227"/>
    </location>
</feature>
<feature type="binding site" evidence="1">
    <location>
        <position position="43"/>
    </location>
    <ligand>
        <name>[4Fe-4S] cluster</name>
        <dbReference type="ChEBI" id="CHEBI:49883"/>
    </ligand>
</feature>
<feature type="binding site" evidence="1">
    <location>
        <position position="44"/>
    </location>
    <ligand>
        <name>[4Fe-4S] cluster</name>
        <dbReference type="ChEBI" id="CHEBI:49883"/>
    </ligand>
</feature>
<feature type="binding site" evidence="1">
    <location>
        <position position="108"/>
    </location>
    <ligand>
        <name>[4Fe-4S] cluster</name>
        <dbReference type="ChEBI" id="CHEBI:49883"/>
    </ligand>
</feature>
<feature type="binding site" evidence="1">
    <location>
        <position position="139"/>
    </location>
    <ligand>
        <name>[4Fe-4S] cluster</name>
        <dbReference type="ChEBI" id="CHEBI:49883"/>
    </ligand>
</feature>
<reference key="1">
    <citation type="journal article" date="2007" name="BMC Genomics">
        <title>Comparative chloroplast genomics: analyses including new sequences from the angiosperms Nuphar advena and Ranunculus macranthus.</title>
        <authorList>
            <person name="Raubeson L.A."/>
            <person name="Peery R."/>
            <person name="Chumley T.W."/>
            <person name="Dziubek C."/>
            <person name="Fourcade H.M."/>
            <person name="Boore J.L."/>
            <person name="Jansen R.K."/>
        </authorList>
    </citation>
    <scope>NUCLEOTIDE SEQUENCE [LARGE SCALE GENOMIC DNA]</scope>
</reference>
<keyword id="KW-0004">4Fe-4S</keyword>
<keyword id="KW-0150">Chloroplast</keyword>
<keyword id="KW-0408">Iron</keyword>
<keyword id="KW-0411">Iron-sulfur</keyword>
<keyword id="KW-0472">Membrane</keyword>
<keyword id="KW-0479">Metal-binding</keyword>
<keyword id="KW-0520">NAD</keyword>
<keyword id="KW-0521">NADP</keyword>
<keyword id="KW-0934">Plastid</keyword>
<keyword id="KW-0618">Plastoquinone</keyword>
<keyword id="KW-0874">Quinone</keyword>
<keyword id="KW-0793">Thylakoid</keyword>
<keyword id="KW-1278">Translocase</keyword>
<keyword id="KW-0813">Transport</keyword>
<name>NDHK_RANMC</name>
<geneLocation type="chloroplast"/>
<proteinExistence type="inferred from homology"/>
<dbReference type="EC" id="7.1.1.-" evidence="1"/>
<dbReference type="EMBL" id="DQ359689">
    <property type="protein sequence ID" value="ABC70760.1"/>
    <property type="molecule type" value="Genomic_DNA"/>
</dbReference>
<dbReference type="RefSeq" id="YP_001004190.1">
    <property type="nucleotide sequence ID" value="NC_008796.1"/>
</dbReference>
<dbReference type="SMR" id="A1XGP2"/>
<dbReference type="GeneID" id="4712170"/>
<dbReference type="GO" id="GO:0009535">
    <property type="term" value="C:chloroplast thylakoid membrane"/>
    <property type="evidence" value="ECO:0007669"/>
    <property type="project" value="UniProtKB-SubCell"/>
</dbReference>
<dbReference type="GO" id="GO:0045271">
    <property type="term" value="C:respiratory chain complex I"/>
    <property type="evidence" value="ECO:0007669"/>
    <property type="project" value="TreeGrafter"/>
</dbReference>
<dbReference type="GO" id="GO:0051539">
    <property type="term" value="F:4 iron, 4 sulfur cluster binding"/>
    <property type="evidence" value="ECO:0007669"/>
    <property type="project" value="UniProtKB-KW"/>
</dbReference>
<dbReference type="GO" id="GO:0005506">
    <property type="term" value="F:iron ion binding"/>
    <property type="evidence" value="ECO:0007669"/>
    <property type="project" value="UniProtKB-UniRule"/>
</dbReference>
<dbReference type="GO" id="GO:0008137">
    <property type="term" value="F:NADH dehydrogenase (ubiquinone) activity"/>
    <property type="evidence" value="ECO:0007669"/>
    <property type="project" value="InterPro"/>
</dbReference>
<dbReference type="GO" id="GO:0048038">
    <property type="term" value="F:quinone binding"/>
    <property type="evidence" value="ECO:0007669"/>
    <property type="project" value="UniProtKB-KW"/>
</dbReference>
<dbReference type="GO" id="GO:0009060">
    <property type="term" value="P:aerobic respiration"/>
    <property type="evidence" value="ECO:0007669"/>
    <property type="project" value="TreeGrafter"/>
</dbReference>
<dbReference type="GO" id="GO:0015990">
    <property type="term" value="P:electron transport coupled proton transport"/>
    <property type="evidence" value="ECO:0007669"/>
    <property type="project" value="TreeGrafter"/>
</dbReference>
<dbReference type="GO" id="GO:0019684">
    <property type="term" value="P:photosynthesis, light reaction"/>
    <property type="evidence" value="ECO:0007669"/>
    <property type="project" value="UniProtKB-UniRule"/>
</dbReference>
<dbReference type="FunFam" id="3.40.50.12280:FF:000003">
    <property type="entry name" value="NAD(P)H-quinone oxidoreductase subunit K, chloroplastic"/>
    <property type="match status" value="1"/>
</dbReference>
<dbReference type="Gene3D" id="3.40.50.12280">
    <property type="match status" value="1"/>
</dbReference>
<dbReference type="HAMAP" id="MF_01356">
    <property type="entry name" value="NDH1_NuoB"/>
    <property type="match status" value="1"/>
</dbReference>
<dbReference type="InterPro" id="IPR006137">
    <property type="entry name" value="NADH_UbQ_OxRdtase-like_20kDa"/>
</dbReference>
<dbReference type="InterPro" id="IPR006138">
    <property type="entry name" value="NADH_UQ_OxRdtase_20Kd_su"/>
</dbReference>
<dbReference type="NCBIfam" id="TIGR01957">
    <property type="entry name" value="nuoB_fam"/>
    <property type="match status" value="1"/>
</dbReference>
<dbReference type="NCBIfam" id="NF005012">
    <property type="entry name" value="PRK06411.1"/>
    <property type="match status" value="1"/>
</dbReference>
<dbReference type="PANTHER" id="PTHR11995">
    <property type="entry name" value="NADH DEHYDROGENASE"/>
    <property type="match status" value="1"/>
</dbReference>
<dbReference type="PANTHER" id="PTHR11995:SF14">
    <property type="entry name" value="NADH DEHYDROGENASE [UBIQUINONE] IRON-SULFUR PROTEIN 7, MITOCHONDRIAL"/>
    <property type="match status" value="1"/>
</dbReference>
<dbReference type="Pfam" id="PF01058">
    <property type="entry name" value="Oxidored_q6"/>
    <property type="match status" value="1"/>
</dbReference>
<dbReference type="SUPFAM" id="SSF56770">
    <property type="entry name" value="HydA/Nqo6-like"/>
    <property type="match status" value="1"/>
</dbReference>
<dbReference type="PROSITE" id="PS01150">
    <property type="entry name" value="COMPLEX1_20K"/>
    <property type="match status" value="1"/>
</dbReference>
<organism>
    <name type="scientific">Ranunculus macranthus</name>
    <name type="common">Large buttercup</name>
    <dbReference type="NCBI Taxonomy" id="334596"/>
    <lineage>
        <taxon>Eukaryota</taxon>
        <taxon>Viridiplantae</taxon>
        <taxon>Streptophyta</taxon>
        <taxon>Embryophyta</taxon>
        <taxon>Tracheophyta</taxon>
        <taxon>Spermatophyta</taxon>
        <taxon>Magnoliopsida</taxon>
        <taxon>Ranunculales</taxon>
        <taxon>Ranunculaceae</taxon>
        <taxon>Ranunculoideae</taxon>
        <taxon>Ranunculeae</taxon>
        <taxon>Ranunculus</taxon>
    </lineage>
</organism>
<gene>
    <name evidence="1" type="primary">ndhK</name>
</gene>